<sequence length="252" mass="27804">MSLLTEVETYVLSIVPSGPLKAEIAQRLEDVFAGKNTDLEALMEWLKTRPILSPLTKGILGFVFTLTVPSERGLQRRRFVQNALNGNGDPNNMDRAVKLYRKLKREITFHGAKEIALSYSAGALASCMGLIYNRMGAVTTEVAFGLVCATCEQIADSQHRSHRQMVATTNPLIRHENRMVLASTTAKAMEQMAGSSEQAAEAMEVASQARQMVQAMRAIGTHPSSSAGLKDDLLENLQAYQKRMGVQMQRFK</sequence>
<gene>
    <name evidence="1" type="primary">M</name>
</gene>
<comment type="function">
    <text evidence="1">Plays critical roles in virus replication, from virus entry and uncoating to assembly and budding of the virus particle. M1 binding to ribonucleocapsids (RNPs) in nucleus seems to inhibit viral transcription. Interaction of viral NEP with M1-RNP is thought to promote nuclear export of the complex, which is targeted to the virion assembly site at the apical plasma membrane in polarized epithelial cells. Interactions with NA and HA may bring M1, a non-raft-associated protein, into lipid rafts. Forms a continuous shell on the inner side of the lipid bilayer in virion, where it binds the RNP. During virus entry into cell, the M2 ion channel acidifies the internal virion core, inducing M1 dissociation from the RNP. M1-free RNPs are transported to the nucleus, where viral transcription and replication can take place.</text>
</comment>
<comment type="function">
    <text evidence="1">Determines the virion's shape: spherical or filamentous. Clinical isolates of influenza are characterized by the presence of significant proportion of filamentous virions, whereas after multiple passage on eggs or cell culture, virions have only spherical morphology. Filamentous virions are thought to be important to infect neighboring cells, and spherical virions more suited to spread through aerosol between hosts organisms.</text>
</comment>
<comment type="subunit">
    <text evidence="1">Homodimer and homomultimer. Interacts with NEP. Binds ribonucleocapsid by both interacting with genomic RNA and NP protein. May interact with HA and NA. Cannot bind NP without genomic RNA.</text>
</comment>
<comment type="subcellular location">
    <subcellularLocation>
        <location evidence="1">Virion membrane</location>
        <topology evidence="1">Peripheral membrane protein</topology>
        <orientation evidence="1">Cytoplasmic side</orientation>
    </subcellularLocation>
    <subcellularLocation>
        <location evidence="1">Host nucleus</location>
    </subcellularLocation>
</comment>
<comment type="alternative products">
    <event type="alternative splicing"/>
    <isoform>
        <id>Q6XT32-1</id>
        <name>M1</name>
        <sequence type="displayed"/>
    </isoform>
    <isoform>
        <id>Q6XT33-1</id>
        <name>M2</name>
        <sequence type="external"/>
    </isoform>
    <text>Only the first 9 residues are shared by the 2 isoforms.</text>
</comment>
<comment type="miscellaneous">
    <text evidence="1">Most abundant protein in virion. When expressed alone can form virus-like particles in transfected cells.</text>
</comment>
<comment type="similarity">
    <text evidence="1">Belongs to the influenza viruses Matrix protein M1 family.</text>
</comment>
<accession>Q6XT32</accession>
<dbReference type="EMBL" id="AY210259">
    <property type="protein sequence ID" value="AAO46691.1"/>
    <property type="molecule type" value="Genomic_RNA"/>
</dbReference>
<dbReference type="SMR" id="Q6XT32"/>
<dbReference type="GO" id="GO:0042025">
    <property type="term" value="C:host cell nucleus"/>
    <property type="evidence" value="ECO:0007669"/>
    <property type="project" value="UniProtKB-SubCell"/>
</dbReference>
<dbReference type="GO" id="GO:0016020">
    <property type="term" value="C:membrane"/>
    <property type="evidence" value="ECO:0007669"/>
    <property type="project" value="UniProtKB-KW"/>
</dbReference>
<dbReference type="GO" id="GO:0055036">
    <property type="term" value="C:virion membrane"/>
    <property type="evidence" value="ECO:0007669"/>
    <property type="project" value="UniProtKB-SubCell"/>
</dbReference>
<dbReference type="GO" id="GO:0003723">
    <property type="term" value="F:RNA binding"/>
    <property type="evidence" value="ECO:0007669"/>
    <property type="project" value="UniProtKB-UniRule"/>
</dbReference>
<dbReference type="GO" id="GO:0039660">
    <property type="term" value="F:structural constituent of virion"/>
    <property type="evidence" value="ECO:0007669"/>
    <property type="project" value="UniProtKB-UniRule"/>
</dbReference>
<dbReference type="GO" id="GO:0046761">
    <property type="term" value="P:viral budding from plasma membrane"/>
    <property type="evidence" value="ECO:0007669"/>
    <property type="project" value="UniProtKB-UniRule"/>
</dbReference>
<dbReference type="FunFam" id="1.10.10.180:FF:000001">
    <property type="entry name" value="Matrix protein 1"/>
    <property type="match status" value="1"/>
</dbReference>
<dbReference type="FunFam" id="1.20.91.10:FF:000001">
    <property type="entry name" value="Matrix protein 1"/>
    <property type="match status" value="1"/>
</dbReference>
<dbReference type="Gene3D" id="1.10.10.180">
    <property type="match status" value="1"/>
</dbReference>
<dbReference type="Gene3D" id="1.20.91.10">
    <property type="match status" value="1"/>
</dbReference>
<dbReference type="HAMAP" id="MF_04068">
    <property type="entry name" value="INFV_M1"/>
    <property type="match status" value="1"/>
</dbReference>
<dbReference type="InterPro" id="IPR036039">
    <property type="entry name" value="Flu_matrix_M1"/>
</dbReference>
<dbReference type="InterPro" id="IPR013188">
    <property type="entry name" value="Flu_matrix_M1_C"/>
</dbReference>
<dbReference type="InterPro" id="IPR001561">
    <property type="entry name" value="Flu_matrix_M1_N"/>
</dbReference>
<dbReference type="InterPro" id="IPR015423">
    <property type="entry name" value="Flu_matrix_M1_N_sub1"/>
</dbReference>
<dbReference type="InterPro" id="IPR015799">
    <property type="entry name" value="Flu_matrix_M1_N_sub2"/>
</dbReference>
<dbReference type="InterPro" id="IPR037533">
    <property type="entry name" value="INFV_M1"/>
</dbReference>
<dbReference type="Pfam" id="PF00598">
    <property type="entry name" value="Flu_M1"/>
    <property type="match status" value="1"/>
</dbReference>
<dbReference type="Pfam" id="PF08289">
    <property type="entry name" value="Flu_M1_C"/>
    <property type="match status" value="1"/>
</dbReference>
<dbReference type="SMART" id="SM00759">
    <property type="entry name" value="Flu_M1_C"/>
    <property type="match status" value="1"/>
</dbReference>
<dbReference type="SUPFAM" id="SSF48145">
    <property type="entry name" value="Influenza virus matrix protein M1"/>
    <property type="match status" value="1"/>
</dbReference>
<feature type="chain" id="PRO_0000326291" description="Matrix protein 1">
    <location>
        <begin position="1"/>
        <end position="252"/>
    </location>
</feature>
<feature type="region of interest" description="Membrane-binding" evidence="1">
    <location>
        <begin position="1"/>
        <end position="164"/>
    </location>
</feature>
<feature type="region of interest" description="RNP-binding" evidence="1">
    <location>
        <begin position="165"/>
        <end position="252"/>
    </location>
</feature>
<feature type="short sequence motif" description="Nuclear localization signal" evidence="1">
    <location>
        <begin position="101"/>
        <end position="105"/>
    </location>
</feature>
<keyword id="KW-0025">Alternative splicing</keyword>
<keyword id="KW-1048">Host nucleus</keyword>
<keyword id="KW-0472">Membrane</keyword>
<keyword id="KW-0694">RNA-binding</keyword>
<keyword id="KW-0468">Viral matrix protein</keyword>
<keyword id="KW-0946">Virion</keyword>
<organismHost>
    <name type="scientific">Aves</name>
    <dbReference type="NCBI Taxonomy" id="8782"/>
</organismHost>
<organismHost>
    <name type="scientific">Cetacea</name>
    <name type="common">whales</name>
    <dbReference type="NCBI Taxonomy" id="9721"/>
</organismHost>
<organismHost>
    <name type="scientific">Homo sapiens</name>
    <name type="common">Human</name>
    <dbReference type="NCBI Taxonomy" id="9606"/>
</organismHost>
<organismHost>
    <name type="scientific">Phocidae</name>
    <name type="common">true seals</name>
    <dbReference type="NCBI Taxonomy" id="9709"/>
</organismHost>
<organismHost>
    <name type="scientific">Sus scrofa</name>
    <name type="common">Pig</name>
    <dbReference type="NCBI Taxonomy" id="9823"/>
</organismHost>
<name>M1_I70A0</name>
<protein>
    <recommendedName>
        <fullName evidence="1">Matrix protein 1</fullName>
        <shortName evidence="1">M1</shortName>
    </recommendedName>
</protein>
<reference key="1">
    <citation type="journal article" date="2004" name="Virology">
        <title>Genetic analysis of human H2N2 and early H3N2 influenza viruses, 1957-1972: evidence for genetic divergence and multiple reassortment events.</title>
        <authorList>
            <person name="Lindstrom S.E."/>
            <person name="Cox N.J."/>
            <person name="Klimov A."/>
        </authorList>
    </citation>
    <scope>NUCLEOTIDE SEQUENCE [GENOMIC RNA]</scope>
</reference>
<proteinExistence type="inferred from homology"/>
<organism>
    <name type="scientific">Influenza A virus (strain A/Qu/7/1970 H3N2)</name>
    <dbReference type="NCBI Taxonomy" id="221016"/>
    <lineage>
        <taxon>Viruses</taxon>
        <taxon>Riboviria</taxon>
        <taxon>Orthornavirae</taxon>
        <taxon>Negarnaviricota</taxon>
        <taxon>Polyploviricotina</taxon>
        <taxon>Insthoviricetes</taxon>
        <taxon>Articulavirales</taxon>
        <taxon>Orthomyxoviridae</taxon>
        <taxon>Alphainfluenzavirus</taxon>
        <taxon>Alphainfluenzavirus influenzae</taxon>
        <taxon>Influenza A virus</taxon>
    </lineage>
</organism>
<evidence type="ECO:0000255" key="1">
    <source>
        <dbReference type="HAMAP-Rule" id="MF_04068"/>
    </source>
</evidence>